<accession>Q9XS47</accession>
<accession>Q2KII8</accession>
<sequence length="149" mass="17094">MPTVRLFTCFLQLLTGLVLPAVPTTQWALSPGNISSEVEVVPFQQVWSRSYCRPVERLVDIVSEYPSEMEHLFSPSCVSLMRCTGCCSDESMHCVPLETANVTMQLMKYRSLDQPFFVEMSFSQHVRCECKPLWEKMKQTRCGDTISQR</sequence>
<feature type="signal peptide" evidence="2">
    <location>
        <begin position="1"/>
        <end position="18"/>
    </location>
</feature>
<feature type="chain" id="PRO_0000023419" description="Placenta growth factor">
    <location>
        <begin position="19"/>
        <end position="149"/>
    </location>
</feature>
<feature type="glycosylation site" description="N-linked (GlcNAc...) asparagine" evidence="2">
    <location>
        <position position="33"/>
    </location>
</feature>
<feature type="glycosylation site" description="N-linked (GlcNAc...) asparagine" evidence="2">
    <location>
        <position position="101"/>
    </location>
</feature>
<feature type="disulfide bond" evidence="1">
    <location>
        <begin position="52"/>
        <end position="94"/>
    </location>
</feature>
<feature type="disulfide bond" description="Interchain" evidence="1">
    <location>
        <position position="77"/>
    </location>
</feature>
<feature type="disulfide bond" evidence="1">
    <location>
        <begin position="83"/>
        <end position="128"/>
    </location>
</feature>
<feature type="disulfide bond" description="Interchain" evidence="1">
    <location>
        <position position="86"/>
    </location>
</feature>
<feature type="disulfide bond" evidence="1">
    <location>
        <begin position="87"/>
        <end position="130"/>
    </location>
</feature>
<gene>
    <name type="primary">PGF</name>
    <name type="synonym">PLGF</name>
</gene>
<reference key="1">
    <citation type="submission" date="1997-05" db="EMBL/GenBank/DDBJ databases">
        <title>Structure and expression of bovine VEGF family.</title>
        <authorList>
            <person name="Liu X."/>
            <person name="Yonekura H."/>
            <person name="Yamagishi S."/>
            <person name="Yamamoto Y."/>
            <person name="Yamamoto H."/>
        </authorList>
    </citation>
    <scope>NUCLEOTIDE SEQUENCE [MRNA]</scope>
    <source>
        <tissue>Heart</tissue>
    </source>
</reference>
<reference key="2">
    <citation type="submission" date="2006-01" db="EMBL/GenBank/DDBJ databases">
        <authorList>
            <consortium name="NIH - Mammalian Gene Collection (MGC) project"/>
        </authorList>
    </citation>
    <scope>NUCLEOTIDE SEQUENCE [LARGE SCALE MRNA]</scope>
    <source>
        <strain>Hereford</strain>
        <tissue>Hypothalamus</tissue>
    </source>
</reference>
<comment type="function">
    <text evidence="1">Growth factor active in angiogenesis and endothelial cell growth, stimulating their proliferation and migration. It binds to the receptor FLT1/VEGFR-1. Also promotes cell tumor growth (By similarity).</text>
</comment>
<comment type="subunit">
    <text evidence="1">Antiparallel homodimer; disulfide-linked. Also found as heterodimer with VEGFA/VEGF (By similarity).</text>
</comment>
<comment type="subcellular location">
    <subcellularLocation>
        <location evidence="1">Secreted</location>
    </subcellularLocation>
</comment>
<comment type="similarity">
    <text evidence="3">Belongs to the PDGF/VEGF growth factor family.</text>
</comment>
<keyword id="KW-0037">Angiogenesis</keyword>
<keyword id="KW-0217">Developmental protein</keyword>
<keyword id="KW-0221">Differentiation</keyword>
<keyword id="KW-1015">Disulfide bond</keyword>
<keyword id="KW-0325">Glycoprotein</keyword>
<keyword id="KW-0339">Growth factor</keyword>
<keyword id="KW-0497">Mitogen</keyword>
<keyword id="KW-1185">Reference proteome</keyword>
<keyword id="KW-0964">Secreted</keyword>
<keyword id="KW-0732">Signal</keyword>
<proteinExistence type="evidence at transcript level"/>
<protein>
    <recommendedName>
        <fullName>Placenta growth factor</fullName>
        <shortName>PlGF</shortName>
    </recommendedName>
</protein>
<dbReference type="EMBL" id="AB004272">
    <property type="protein sequence ID" value="BAA77684.1"/>
    <property type="molecule type" value="mRNA"/>
</dbReference>
<dbReference type="EMBL" id="BC112622">
    <property type="protein sequence ID" value="AAI12623.1"/>
    <property type="molecule type" value="mRNA"/>
</dbReference>
<dbReference type="RefSeq" id="NP_776375.1">
    <property type="nucleotide sequence ID" value="NM_173950.2"/>
</dbReference>
<dbReference type="SMR" id="Q9XS47"/>
<dbReference type="FunCoup" id="Q9XS47">
    <property type="interactions" value="494"/>
</dbReference>
<dbReference type="STRING" id="9913.ENSBTAP00000073796"/>
<dbReference type="GlyCosmos" id="Q9XS47">
    <property type="glycosylation" value="2 sites, No reported glycans"/>
</dbReference>
<dbReference type="GlyGen" id="Q9XS47">
    <property type="glycosylation" value="2 sites"/>
</dbReference>
<dbReference type="PaxDb" id="9913-ENSBTAP00000018196"/>
<dbReference type="Ensembl" id="ENSBTAT00000018196.6">
    <property type="protein sequence ID" value="ENSBTAP00000018196.4"/>
    <property type="gene ID" value="ENSBTAG00000013688.7"/>
</dbReference>
<dbReference type="GeneID" id="280894"/>
<dbReference type="KEGG" id="bta:280894"/>
<dbReference type="CTD" id="5228"/>
<dbReference type="VEuPathDB" id="HostDB:ENSBTAG00000013688"/>
<dbReference type="VGNC" id="VGNC:32787">
    <property type="gene designation" value="PGF"/>
</dbReference>
<dbReference type="eggNOG" id="ENOG502S2DE">
    <property type="taxonomic scope" value="Eukaryota"/>
</dbReference>
<dbReference type="GeneTree" id="ENSGT00940000160164"/>
<dbReference type="HOGENOM" id="CLU_042996_1_0_1"/>
<dbReference type="InParanoid" id="Q9XS47"/>
<dbReference type="OrthoDB" id="6370328at2759"/>
<dbReference type="TreeFam" id="TF319554"/>
<dbReference type="Reactome" id="R-BTA-194313">
    <property type="pathway name" value="VEGF ligand-receptor interactions"/>
</dbReference>
<dbReference type="Reactome" id="R-BTA-195399">
    <property type="pathway name" value="VEGF binds to VEGFR leading to receptor dimerization"/>
</dbReference>
<dbReference type="Proteomes" id="UP000009136">
    <property type="component" value="Chromosome 10"/>
</dbReference>
<dbReference type="Bgee" id="ENSBTAG00000013688">
    <property type="expression patterns" value="Expressed in cumulus cell and 95 other cell types or tissues"/>
</dbReference>
<dbReference type="GO" id="GO:0005615">
    <property type="term" value="C:extracellular space"/>
    <property type="evidence" value="ECO:0000318"/>
    <property type="project" value="GO_Central"/>
</dbReference>
<dbReference type="GO" id="GO:0016020">
    <property type="term" value="C:membrane"/>
    <property type="evidence" value="ECO:0007669"/>
    <property type="project" value="InterPro"/>
</dbReference>
<dbReference type="GO" id="GO:0042056">
    <property type="term" value="F:chemoattractant activity"/>
    <property type="evidence" value="ECO:0000318"/>
    <property type="project" value="GO_Central"/>
</dbReference>
<dbReference type="GO" id="GO:0008083">
    <property type="term" value="F:growth factor activity"/>
    <property type="evidence" value="ECO:0000250"/>
    <property type="project" value="UniProtKB"/>
</dbReference>
<dbReference type="GO" id="GO:0005172">
    <property type="term" value="F:vascular endothelial growth factor receptor binding"/>
    <property type="evidence" value="ECO:0000318"/>
    <property type="project" value="GO_Central"/>
</dbReference>
<dbReference type="GO" id="GO:0030154">
    <property type="term" value="P:cell differentiation"/>
    <property type="evidence" value="ECO:0007669"/>
    <property type="project" value="UniProtKB-KW"/>
</dbReference>
<dbReference type="GO" id="GO:0050930">
    <property type="term" value="P:induction of positive chemotaxis"/>
    <property type="evidence" value="ECO:0000318"/>
    <property type="project" value="GO_Central"/>
</dbReference>
<dbReference type="GO" id="GO:0051781">
    <property type="term" value="P:positive regulation of cell division"/>
    <property type="evidence" value="ECO:0007669"/>
    <property type="project" value="UniProtKB-KW"/>
</dbReference>
<dbReference type="GO" id="GO:0008284">
    <property type="term" value="P:positive regulation of cell population proliferation"/>
    <property type="evidence" value="ECO:0000250"/>
    <property type="project" value="UniProtKB"/>
</dbReference>
<dbReference type="GO" id="GO:0060754">
    <property type="term" value="P:positive regulation of mast cell chemotaxis"/>
    <property type="evidence" value="ECO:0000318"/>
    <property type="project" value="GO_Central"/>
</dbReference>
<dbReference type="GO" id="GO:0001666">
    <property type="term" value="P:response to hypoxia"/>
    <property type="evidence" value="ECO:0000318"/>
    <property type="project" value="GO_Central"/>
</dbReference>
<dbReference type="GO" id="GO:0002040">
    <property type="term" value="P:sprouting angiogenesis"/>
    <property type="evidence" value="ECO:0000318"/>
    <property type="project" value="GO_Central"/>
</dbReference>
<dbReference type="GO" id="GO:0048010">
    <property type="term" value="P:vascular endothelial growth factor receptor signaling pathway"/>
    <property type="evidence" value="ECO:0000318"/>
    <property type="project" value="GO_Central"/>
</dbReference>
<dbReference type="GO" id="GO:0038084">
    <property type="term" value="P:vascular endothelial growth factor signaling pathway"/>
    <property type="evidence" value="ECO:0000318"/>
    <property type="project" value="GO_Central"/>
</dbReference>
<dbReference type="CDD" id="cd00135">
    <property type="entry name" value="PDGF"/>
    <property type="match status" value="1"/>
</dbReference>
<dbReference type="Gene3D" id="2.10.90.10">
    <property type="entry name" value="Cystine-knot cytokines"/>
    <property type="match status" value="1"/>
</dbReference>
<dbReference type="InterPro" id="IPR029034">
    <property type="entry name" value="Cystine-knot_cytokine"/>
</dbReference>
<dbReference type="InterPro" id="IPR023581">
    <property type="entry name" value="PD_growth_factor_CS"/>
</dbReference>
<dbReference type="InterPro" id="IPR000072">
    <property type="entry name" value="PDGF/VEGF_dom"/>
</dbReference>
<dbReference type="InterPro" id="IPR050507">
    <property type="entry name" value="PDGF/VEGF_growth_factor"/>
</dbReference>
<dbReference type="PANTHER" id="PTHR12025:SF9">
    <property type="entry name" value="PLACENTA GROWTH FACTOR"/>
    <property type="match status" value="1"/>
</dbReference>
<dbReference type="PANTHER" id="PTHR12025">
    <property type="entry name" value="VASCULAR ENDOTHELIAL GROWTH FACTOR"/>
    <property type="match status" value="1"/>
</dbReference>
<dbReference type="Pfam" id="PF00341">
    <property type="entry name" value="PDGF"/>
    <property type="match status" value="1"/>
</dbReference>
<dbReference type="SMART" id="SM00141">
    <property type="entry name" value="PDGF"/>
    <property type="match status" value="1"/>
</dbReference>
<dbReference type="SUPFAM" id="SSF57501">
    <property type="entry name" value="Cystine-knot cytokines"/>
    <property type="match status" value="1"/>
</dbReference>
<dbReference type="PROSITE" id="PS00249">
    <property type="entry name" value="PDGF_1"/>
    <property type="match status" value="1"/>
</dbReference>
<dbReference type="PROSITE" id="PS50278">
    <property type="entry name" value="PDGF_2"/>
    <property type="match status" value="1"/>
</dbReference>
<name>PLGF_BOVIN</name>
<organism>
    <name type="scientific">Bos taurus</name>
    <name type="common">Bovine</name>
    <dbReference type="NCBI Taxonomy" id="9913"/>
    <lineage>
        <taxon>Eukaryota</taxon>
        <taxon>Metazoa</taxon>
        <taxon>Chordata</taxon>
        <taxon>Craniata</taxon>
        <taxon>Vertebrata</taxon>
        <taxon>Euteleostomi</taxon>
        <taxon>Mammalia</taxon>
        <taxon>Eutheria</taxon>
        <taxon>Laurasiatheria</taxon>
        <taxon>Artiodactyla</taxon>
        <taxon>Ruminantia</taxon>
        <taxon>Pecora</taxon>
        <taxon>Bovidae</taxon>
        <taxon>Bovinae</taxon>
        <taxon>Bos</taxon>
    </lineage>
</organism>
<evidence type="ECO:0000250" key="1"/>
<evidence type="ECO:0000255" key="2"/>
<evidence type="ECO:0000305" key="3"/>